<feature type="chain" id="PRO_0000081415" description="Ethylene receptor 1">
    <location>
        <begin position="1"/>
        <end position="740"/>
    </location>
</feature>
<feature type="transmembrane region" description="Helical" evidence="2">
    <location>
        <begin position="23"/>
        <end position="43"/>
    </location>
</feature>
<feature type="transmembrane region" description="Helical" evidence="2">
    <location>
        <begin position="53"/>
        <end position="73"/>
    </location>
</feature>
<feature type="transmembrane region" description="Helical" evidence="2">
    <location>
        <begin position="92"/>
        <end position="112"/>
    </location>
</feature>
<feature type="domain" description="GAF">
    <location>
        <begin position="158"/>
        <end position="307"/>
    </location>
</feature>
<feature type="domain" description="Histidine kinase" evidence="3">
    <location>
        <begin position="350"/>
        <end position="588"/>
    </location>
</feature>
<feature type="domain" description="Response regulatory" evidence="4">
    <location>
        <begin position="614"/>
        <end position="731"/>
    </location>
</feature>
<feature type="binding site" evidence="1">
    <location>
        <position position="65"/>
    </location>
    <ligand>
        <name>Cu cation</name>
        <dbReference type="ChEBI" id="CHEBI:23378"/>
    </ligand>
</feature>
<feature type="binding site" evidence="1">
    <location>
        <position position="69"/>
    </location>
    <ligand>
        <name>Cu cation</name>
        <dbReference type="ChEBI" id="CHEBI:23378"/>
    </ligand>
</feature>
<feature type="modified residue" description="Phosphohistidine; by autocatalysis" evidence="3">
    <location>
        <position position="353"/>
    </location>
</feature>
<feature type="modified residue" description="4-aspartylphosphate" evidence="4">
    <location>
        <position position="662"/>
    </location>
</feature>
<feature type="disulfide bond" description="Interchain" evidence="1">
    <location>
        <position position="4"/>
    </location>
</feature>
<feature type="disulfide bond" description="Interchain" evidence="1">
    <location>
        <position position="6"/>
    </location>
</feature>
<proteinExistence type="evidence at transcript level"/>
<sequence length="740" mass="82640">METCYCIEPQWPADELLMKYQYISDFFIALAYFSIPLELIYFVKKSAVFPYRWVLVQFGAFIVLCGATHLINLWTFTMHSRTVAVVMTTAKVLTAVVSCATALMLVHIIPDLLSVKTRELFLKNKAAELDREMGLIRTQEETGRHVRMLTHEIRSTLDRHTILKTTLVELGRTLALEECALWMPTRTGLELQLSYTLHQQNPVGYTVPINLPVISQVFSSNRAVKISPNSPVASLRPRAGRYVAGEVVAVRVPLLHLSNFQINDWPELSTKRYALMVLMLPSDSARQWRVHELELVEVVADQVAVALSHAAILEESMRARDPLMEQNVALDLARREAETANHARNDFLAVMNHEMRTPMHAIIALSSLLQETELTPEQRLMVETILKSSNLLATLINDVLDLSRLEDGSLQLDIGTFNLHAVFKEVLNLIKPVTLVKKLSLTLHLGLDLPVFAVGDEKRLMQAILNVVGNAVKFSKEGSISISAIVAKAETFREIRVPDFHPVPSDSHFYLRVQVKDTGSGISPQDIPKLFTKFAQTTVGPRNSCGSGLGLAICKRFVNLMEGHIWLESEGLGKGCTATFIVKLGIAEQSNESKLPFTSKIHENSIHTSFPGLKVLVMDDNGVSRSVTKGLLVHLGCEVTTAGSIEEFLRVVSQEHKVVFMDICTPGVDGYELAIRIREKFAKCHERPFMVVLTGNSDKVTKESCLRAGMDGLILKPVSIDKMRSVLSELIERRVLFETS</sequence>
<comment type="function">
    <text evidence="1">May act early in the ethylene signal transduction pathway, possibly as an ethylene receptor, or as a regulator of the pathway.</text>
</comment>
<comment type="catalytic activity">
    <reaction>
        <text>ATP + protein L-histidine = ADP + protein N-phospho-L-histidine.</text>
        <dbReference type="EC" id="2.7.13.3"/>
    </reaction>
</comment>
<comment type="cofactor">
    <cofactor evidence="1">
        <name>Cu cation</name>
        <dbReference type="ChEBI" id="CHEBI:23378"/>
    </cofactor>
    <text evidence="1">Binds 1 copper ion per dimer.</text>
</comment>
<comment type="subunit">
    <text evidence="1">Homodimer; disulfide-linked.</text>
</comment>
<comment type="subcellular location">
    <subcellularLocation>
        <location evidence="1">Endoplasmic reticulum membrane</location>
        <topology evidence="1">Multi-pass membrane protein</topology>
    </subcellularLocation>
</comment>
<comment type="PTM">
    <text evidence="1">Activation probably requires a transfer of a phosphate group between a His in the transmitter domain and an Asp of the receiver domain.</text>
</comment>
<comment type="similarity">
    <text evidence="5">Belongs to the ethylene receptor family.</text>
</comment>
<accession>Q9SSY6</accession>
<gene>
    <name type="primary">ETR1</name>
</gene>
<keyword id="KW-0067">ATP-binding</keyword>
<keyword id="KW-0186">Copper</keyword>
<keyword id="KW-1015">Disulfide bond</keyword>
<keyword id="KW-0256">Endoplasmic reticulum</keyword>
<keyword id="KW-0936">Ethylene signaling pathway</keyword>
<keyword id="KW-0418">Kinase</keyword>
<keyword id="KW-0472">Membrane</keyword>
<keyword id="KW-0479">Metal-binding</keyword>
<keyword id="KW-0547">Nucleotide-binding</keyword>
<keyword id="KW-0597">Phosphoprotein</keyword>
<keyword id="KW-0675">Receptor</keyword>
<keyword id="KW-0808">Transferase</keyword>
<keyword id="KW-0812">Transmembrane</keyword>
<keyword id="KW-1133">Transmembrane helix</keyword>
<keyword id="KW-0902">Two-component regulatory system</keyword>
<name>ETR1_CUCSA</name>
<evidence type="ECO:0000250" key="1"/>
<evidence type="ECO:0000255" key="2"/>
<evidence type="ECO:0000255" key="3">
    <source>
        <dbReference type="PROSITE-ProRule" id="PRU00107"/>
    </source>
</evidence>
<evidence type="ECO:0000255" key="4">
    <source>
        <dbReference type="PROSITE-ProRule" id="PRU00169"/>
    </source>
</evidence>
<evidence type="ECO:0000305" key="5"/>
<dbReference type="EC" id="2.7.13.3"/>
<dbReference type="EMBL" id="AB026498">
    <property type="protein sequence ID" value="BAA85817.1"/>
    <property type="molecule type" value="mRNA"/>
</dbReference>
<dbReference type="RefSeq" id="NP_001267562.1">
    <property type="nucleotide sequence ID" value="NM_001280633.1"/>
</dbReference>
<dbReference type="SMR" id="Q9SSY6"/>
<dbReference type="GeneID" id="101213479"/>
<dbReference type="KEGG" id="csv:101213479"/>
<dbReference type="eggNOG" id="KOG0519">
    <property type="taxonomic scope" value="Eukaryota"/>
</dbReference>
<dbReference type="OrthoDB" id="60033at2759"/>
<dbReference type="BRENDA" id="2.7.13.3">
    <property type="organism ID" value="1733"/>
</dbReference>
<dbReference type="GO" id="GO:0005789">
    <property type="term" value="C:endoplasmic reticulum membrane"/>
    <property type="evidence" value="ECO:0007669"/>
    <property type="project" value="UniProtKB-SubCell"/>
</dbReference>
<dbReference type="GO" id="GO:0005524">
    <property type="term" value="F:ATP binding"/>
    <property type="evidence" value="ECO:0007669"/>
    <property type="project" value="UniProtKB-KW"/>
</dbReference>
<dbReference type="GO" id="GO:0051740">
    <property type="term" value="F:ethylene binding"/>
    <property type="evidence" value="ECO:0007669"/>
    <property type="project" value="InterPro"/>
</dbReference>
<dbReference type="GO" id="GO:0038199">
    <property type="term" value="F:ethylene receptor activity"/>
    <property type="evidence" value="ECO:0007669"/>
    <property type="project" value="InterPro"/>
</dbReference>
<dbReference type="GO" id="GO:0046872">
    <property type="term" value="F:metal ion binding"/>
    <property type="evidence" value="ECO:0007669"/>
    <property type="project" value="UniProtKB-KW"/>
</dbReference>
<dbReference type="GO" id="GO:0000155">
    <property type="term" value="F:phosphorelay sensor kinase activity"/>
    <property type="evidence" value="ECO:0007669"/>
    <property type="project" value="InterPro"/>
</dbReference>
<dbReference type="GO" id="GO:0010105">
    <property type="term" value="P:negative regulation of ethylene-activated signaling pathway"/>
    <property type="evidence" value="ECO:0007669"/>
    <property type="project" value="UniProtKB-ARBA"/>
</dbReference>
<dbReference type="CDD" id="cd00082">
    <property type="entry name" value="HisKA"/>
    <property type="match status" value="1"/>
</dbReference>
<dbReference type="CDD" id="cd19933">
    <property type="entry name" value="REC_ETR-like"/>
    <property type="match status" value="1"/>
</dbReference>
<dbReference type="FunFam" id="3.40.50.2300:FF:000192">
    <property type="entry name" value="Ethylene receptor"/>
    <property type="match status" value="1"/>
</dbReference>
<dbReference type="FunFam" id="1.10.287.130:FF:000004">
    <property type="entry name" value="Ethylene receptor 1"/>
    <property type="match status" value="1"/>
</dbReference>
<dbReference type="FunFam" id="3.30.565.10:FF:000030">
    <property type="entry name" value="Ethylene receptor 1"/>
    <property type="match status" value="1"/>
</dbReference>
<dbReference type="FunFam" id="3.30.450.40:FF:000026">
    <property type="entry name" value="Ethylene response sensor"/>
    <property type="match status" value="1"/>
</dbReference>
<dbReference type="Gene3D" id="1.10.287.130">
    <property type="match status" value="1"/>
</dbReference>
<dbReference type="Gene3D" id="3.30.450.40">
    <property type="match status" value="1"/>
</dbReference>
<dbReference type="Gene3D" id="3.40.50.2300">
    <property type="match status" value="1"/>
</dbReference>
<dbReference type="Gene3D" id="3.30.565.10">
    <property type="entry name" value="Histidine kinase-like ATPase, C-terminal domain"/>
    <property type="match status" value="1"/>
</dbReference>
<dbReference type="InterPro" id="IPR011006">
    <property type="entry name" value="CheY-like_superfamily"/>
</dbReference>
<dbReference type="InterPro" id="IPR014525">
    <property type="entry name" value="ETR"/>
</dbReference>
<dbReference type="InterPro" id="IPR003018">
    <property type="entry name" value="GAF"/>
</dbReference>
<dbReference type="InterPro" id="IPR029016">
    <property type="entry name" value="GAF-like_dom_sf"/>
</dbReference>
<dbReference type="InterPro" id="IPR036890">
    <property type="entry name" value="HATPase_C_sf"/>
</dbReference>
<dbReference type="InterPro" id="IPR005467">
    <property type="entry name" value="His_kinase_dom"/>
</dbReference>
<dbReference type="InterPro" id="IPR003661">
    <property type="entry name" value="HisK_dim/P_dom"/>
</dbReference>
<dbReference type="InterPro" id="IPR036097">
    <property type="entry name" value="HisK_dim/P_sf"/>
</dbReference>
<dbReference type="InterPro" id="IPR004358">
    <property type="entry name" value="Sig_transdc_His_kin-like_C"/>
</dbReference>
<dbReference type="InterPro" id="IPR001789">
    <property type="entry name" value="Sig_transdc_resp-reg_receiver"/>
</dbReference>
<dbReference type="PANTHER" id="PTHR24423:SF615">
    <property type="entry name" value="ETHYLENE RECEPTOR 1"/>
    <property type="match status" value="1"/>
</dbReference>
<dbReference type="PANTHER" id="PTHR24423">
    <property type="entry name" value="TWO-COMPONENT SENSOR HISTIDINE KINASE"/>
    <property type="match status" value="1"/>
</dbReference>
<dbReference type="Pfam" id="PF25487">
    <property type="entry name" value="ETR1_N"/>
    <property type="match status" value="1"/>
</dbReference>
<dbReference type="Pfam" id="PF01590">
    <property type="entry name" value="GAF"/>
    <property type="match status" value="1"/>
</dbReference>
<dbReference type="Pfam" id="PF02518">
    <property type="entry name" value="HATPase_c"/>
    <property type="match status" value="1"/>
</dbReference>
<dbReference type="Pfam" id="PF00512">
    <property type="entry name" value="HisKA"/>
    <property type="match status" value="1"/>
</dbReference>
<dbReference type="Pfam" id="PF00072">
    <property type="entry name" value="Response_reg"/>
    <property type="match status" value="1"/>
</dbReference>
<dbReference type="PIRSF" id="PIRSF026389">
    <property type="entry name" value="Ethyln_sen_HK"/>
    <property type="match status" value="1"/>
</dbReference>
<dbReference type="PRINTS" id="PR00344">
    <property type="entry name" value="BCTRLSENSOR"/>
</dbReference>
<dbReference type="SMART" id="SM00065">
    <property type="entry name" value="GAF"/>
    <property type="match status" value="1"/>
</dbReference>
<dbReference type="SMART" id="SM00387">
    <property type="entry name" value="HATPase_c"/>
    <property type="match status" value="1"/>
</dbReference>
<dbReference type="SMART" id="SM00388">
    <property type="entry name" value="HisKA"/>
    <property type="match status" value="1"/>
</dbReference>
<dbReference type="SMART" id="SM00448">
    <property type="entry name" value="REC"/>
    <property type="match status" value="1"/>
</dbReference>
<dbReference type="SUPFAM" id="SSF55874">
    <property type="entry name" value="ATPase domain of HSP90 chaperone/DNA topoisomerase II/histidine kinase"/>
    <property type="match status" value="1"/>
</dbReference>
<dbReference type="SUPFAM" id="SSF52172">
    <property type="entry name" value="CheY-like"/>
    <property type="match status" value="1"/>
</dbReference>
<dbReference type="SUPFAM" id="SSF55781">
    <property type="entry name" value="GAF domain-like"/>
    <property type="match status" value="1"/>
</dbReference>
<dbReference type="SUPFAM" id="SSF47384">
    <property type="entry name" value="Homodimeric domain of signal transducing histidine kinase"/>
    <property type="match status" value="1"/>
</dbReference>
<dbReference type="PROSITE" id="PS50109">
    <property type="entry name" value="HIS_KIN"/>
    <property type="match status" value="1"/>
</dbReference>
<dbReference type="PROSITE" id="PS50110">
    <property type="entry name" value="RESPONSE_REGULATORY"/>
    <property type="match status" value="1"/>
</dbReference>
<protein>
    <recommendedName>
        <fullName>Ethylene receptor 1</fullName>
        <ecNumber>2.7.13.3</ecNumber>
    </recommendedName>
    <alternativeName>
        <fullName>CS-ETR1</fullName>
    </alternativeName>
</protein>
<reference key="1">
    <citation type="journal article" date="2000" name="Plant Cell Physiol.">
        <title>The ethylene-regulated expression of CS-ETR2 and CS-ERS genes in cucumber plants and their possible involvement with sex expression in flowers.</title>
        <authorList>
            <person name="Yamasaki S."/>
            <person name="Fujii N."/>
            <person name="Takahashi H."/>
        </authorList>
    </citation>
    <scope>NUCLEOTIDE SEQUENCE [MRNA]</scope>
</reference>
<organism>
    <name type="scientific">Cucumis sativus</name>
    <name type="common">Cucumber</name>
    <dbReference type="NCBI Taxonomy" id="3659"/>
    <lineage>
        <taxon>Eukaryota</taxon>
        <taxon>Viridiplantae</taxon>
        <taxon>Streptophyta</taxon>
        <taxon>Embryophyta</taxon>
        <taxon>Tracheophyta</taxon>
        <taxon>Spermatophyta</taxon>
        <taxon>Magnoliopsida</taxon>
        <taxon>eudicotyledons</taxon>
        <taxon>Gunneridae</taxon>
        <taxon>Pentapetalae</taxon>
        <taxon>rosids</taxon>
        <taxon>fabids</taxon>
        <taxon>Cucurbitales</taxon>
        <taxon>Cucurbitaceae</taxon>
        <taxon>Benincaseae</taxon>
        <taxon>Cucumis</taxon>
    </lineage>
</organism>